<feature type="chain" id="PRO_0000188877" description="tRNA modification GTPase MnmE">
    <location>
        <begin position="1"/>
        <end position="465"/>
    </location>
</feature>
<feature type="domain" description="TrmE-type G">
    <location>
        <begin position="227"/>
        <end position="386"/>
    </location>
</feature>
<feature type="binding site" evidence="1">
    <location>
        <position position="27"/>
    </location>
    <ligand>
        <name>(6S)-5-formyl-5,6,7,8-tetrahydrofolate</name>
        <dbReference type="ChEBI" id="CHEBI:57457"/>
    </ligand>
</feature>
<feature type="binding site" evidence="1">
    <location>
        <position position="91"/>
    </location>
    <ligand>
        <name>(6S)-5-formyl-5,6,7,8-tetrahydrofolate</name>
        <dbReference type="ChEBI" id="CHEBI:57457"/>
    </ligand>
</feature>
<feature type="binding site" evidence="1">
    <location>
        <position position="130"/>
    </location>
    <ligand>
        <name>(6S)-5-formyl-5,6,7,8-tetrahydrofolate</name>
        <dbReference type="ChEBI" id="CHEBI:57457"/>
    </ligand>
</feature>
<feature type="binding site" evidence="1">
    <location>
        <begin position="237"/>
        <end position="242"/>
    </location>
    <ligand>
        <name>GTP</name>
        <dbReference type="ChEBI" id="CHEBI:37565"/>
    </ligand>
</feature>
<feature type="binding site" evidence="1">
    <location>
        <position position="237"/>
    </location>
    <ligand>
        <name>K(+)</name>
        <dbReference type="ChEBI" id="CHEBI:29103"/>
    </ligand>
</feature>
<feature type="binding site" evidence="1">
    <location>
        <position position="241"/>
    </location>
    <ligand>
        <name>Mg(2+)</name>
        <dbReference type="ChEBI" id="CHEBI:18420"/>
    </ligand>
</feature>
<feature type="binding site" evidence="1">
    <location>
        <begin position="256"/>
        <end position="262"/>
    </location>
    <ligand>
        <name>GTP</name>
        <dbReference type="ChEBI" id="CHEBI:37565"/>
    </ligand>
</feature>
<feature type="binding site" evidence="1">
    <location>
        <position position="256"/>
    </location>
    <ligand>
        <name>K(+)</name>
        <dbReference type="ChEBI" id="CHEBI:29103"/>
    </ligand>
</feature>
<feature type="binding site" evidence="1">
    <location>
        <position position="258"/>
    </location>
    <ligand>
        <name>K(+)</name>
        <dbReference type="ChEBI" id="CHEBI:29103"/>
    </ligand>
</feature>
<feature type="binding site" evidence="1">
    <location>
        <position position="261"/>
    </location>
    <ligand>
        <name>K(+)</name>
        <dbReference type="ChEBI" id="CHEBI:29103"/>
    </ligand>
</feature>
<feature type="binding site" evidence="1">
    <location>
        <position position="262"/>
    </location>
    <ligand>
        <name>Mg(2+)</name>
        <dbReference type="ChEBI" id="CHEBI:18420"/>
    </ligand>
</feature>
<feature type="binding site" evidence="1">
    <location>
        <begin position="281"/>
        <end position="284"/>
    </location>
    <ligand>
        <name>GTP</name>
        <dbReference type="ChEBI" id="CHEBI:37565"/>
    </ligand>
</feature>
<feature type="binding site" evidence="1">
    <location>
        <position position="465"/>
    </location>
    <ligand>
        <name>(6S)-5-formyl-5,6,7,8-tetrahydrofolate</name>
        <dbReference type="ChEBI" id="CHEBI:57457"/>
    </ligand>
</feature>
<name>MNME_ENTFA</name>
<reference key="1">
    <citation type="journal article" date="2003" name="Science">
        <title>Role of mobile DNA in the evolution of vancomycin-resistant Enterococcus faecalis.</title>
        <authorList>
            <person name="Paulsen I.T."/>
            <person name="Banerjei L."/>
            <person name="Myers G.S.A."/>
            <person name="Nelson K.E."/>
            <person name="Seshadri R."/>
            <person name="Read T.D."/>
            <person name="Fouts D.E."/>
            <person name="Eisen J.A."/>
            <person name="Gill S.R."/>
            <person name="Heidelberg J.F."/>
            <person name="Tettelin H."/>
            <person name="Dodson R.J."/>
            <person name="Umayam L.A."/>
            <person name="Brinkac L.M."/>
            <person name="Beanan M.J."/>
            <person name="Daugherty S.C."/>
            <person name="DeBoy R.T."/>
            <person name="Durkin S.A."/>
            <person name="Kolonay J.F."/>
            <person name="Madupu R."/>
            <person name="Nelson W.C."/>
            <person name="Vamathevan J.J."/>
            <person name="Tran B."/>
            <person name="Upton J."/>
            <person name="Hansen T."/>
            <person name="Shetty J."/>
            <person name="Khouri H.M."/>
            <person name="Utterback T.R."/>
            <person name="Radune D."/>
            <person name="Ketchum K.A."/>
            <person name="Dougherty B.A."/>
            <person name="Fraser C.M."/>
        </authorList>
    </citation>
    <scope>NUCLEOTIDE SEQUENCE [LARGE SCALE GENOMIC DNA]</scope>
    <source>
        <strain>ATCC 700802 / V583</strain>
    </source>
</reference>
<protein>
    <recommendedName>
        <fullName evidence="1">tRNA modification GTPase MnmE</fullName>
        <ecNumber evidence="1">3.6.-.-</ecNumber>
    </recommendedName>
</protein>
<gene>
    <name evidence="1" type="primary">mnmE</name>
    <name evidence="1" type="synonym">trmE</name>
    <name type="ordered locus">EF_3312</name>
</gene>
<evidence type="ECO:0000255" key="1">
    <source>
        <dbReference type="HAMAP-Rule" id="MF_00379"/>
    </source>
</evidence>
<dbReference type="EC" id="3.6.-.-" evidence="1"/>
<dbReference type="EMBL" id="AE016830">
    <property type="protein sequence ID" value="AAO82977.1"/>
    <property type="molecule type" value="Genomic_DNA"/>
</dbReference>
<dbReference type="RefSeq" id="NP_816907.1">
    <property type="nucleotide sequence ID" value="NC_004668.1"/>
</dbReference>
<dbReference type="RefSeq" id="WP_002379284.1">
    <property type="nucleotide sequence ID" value="NZ_KE136524.1"/>
</dbReference>
<dbReference type="SMR" id="Q820T0"/>
<dbReference type="STRING" id="226185.EF_3312"/>
<dbReference type="EnsemblBacteria" id="AAO82977">
    <property type="protein sequence ID" value="AAO82977"/>
    <property type="gene ID" value="EF_3312"/>
</dbReference>
<dbReference type="KEGG" id="efa:EF3312"/>
<dbReference type="PATRIC" id="fig|226185.45.peg.275"/>
<dbReference type="eggNOG" id="COG0486">
    <property type="taxonomic scope" value="Bacteria"/>
</dbReference>
<dbReference type="HOGENOM" id="CLU_019624_4_1_9"/>
<dbReference type="Proteomes" id="UP000001415">
    <property type="component" value="Chromosome"/>
</dbReference>
<dbReference type="GO" id="GO:0005829">
    <property type="term" value="C:cytosol"/>
    <property type="evidence" value="ECO:0007669"/>
    <property type="project" value="TreeGrafter"/>
</dbReference>
<dbReference type="GO" id="GO:0005525">
    <property type="term" value="F:GTP binding"/>
    <property type="evidence" value="ECO:0007669"/>
    <property type="project" value="UniProtKB-UniRule"/>
</dbReference>
<dbReference type="GO" id="GO:0003924">
    <property type="term" value="F:GTPase activity"/>
    <property type="evidence" value="ECO:0007669"/>
    <property type="project" value="UniProtKB-UniRule"/>
</dbReference>
<dbReference type="GO" id="GO:0046872">
    <property type="term" value="F:metal ion binding"/>
    <property type="evidence" value="ECO:0007669"/>
    <property type="project" value="UniProtKB-KW"/>
</dbReference>
<dbReference type="GO" id="GO:0030488">
    <property type="term" value="P:tRNA methylation"/>
    <property type="evidence" value="ECO:0007669"/>
    <property type="project" value="TreeGrafter"/>
</dbReference>
<dbReference type="GO" id="GO:0002098">
    <property type="term" value="P:tRNA wobble uridine modification"/>
    <property type="evidence" value="ECO:0007669"/>
    <property type="project" value="TreeGrafter"/>
</dbReference>
<dbReference type="CDD" id="cd04164">
    <property type="entry name" value="trmE"/>
    <property type="match status" value="1"/>
</dbReference>
<dbReference type="CDD" id="cd14858">
    <property type="entry name" value="TrmE_N"/>
    <property type="match status" value="1"/>
</dbReference>
<dbReference type="FunFam" id="3.30.1360.120:FF:000003">
    <property type="entry name" value="tRNA modification GTPase MnmE"/>
    <property type="match status" value="1"/>
</dbReference>
<dbReference type="FunFam" id="3.40.50.300:FF:000494">
    <property type="entry name" value="tRNA modification GTPase MnmE"/>
    <property type="match status" value="1"/>
</dbReference>
<dbReference type="Gene3D" id="3.40.50.300">
    <property type="entry name" value="P-loop containing nucleotide triphosphate hydrolases"/>
    <property type="match status" value="1"/>
</dbReference>
<dbReference type="Gene3D" id="3.30.1360.120">
    <property type="entry name" value="Probable tRNA modification gtpase trme, domain 1"/>
    <property type="match status" value="1"/>
</dbReference>
<dbReference type="Gene3D" id="1.20.120.430">
    <property type="entry name" value="tRNA modification GTPase MnmE domain 2"/>
    <property type="match status" value="1"/>
</dbReference>
<dbReference type="HAMAP" id="MF_00379">
    <property type="entry name" value="GTPase_MnmE"/>
    <property type="match status" value="1"/>
</dbReference>
<dbReference type="InterPro" id="IPR031168">
    <property type="entry name" value="G_TrmE"/>
</dbReference>
<dbReference type="InterPro" id="IPR006073">
    <property type="entry name" value="GTP-bd"/>
</dbReference>
<dbReference type="InterPro" id="IPR018948">
    <property type="entry name" value="GTP-bd_TrmE_N"/>
</dbReference>
<dbReference type="InterPro" id="IPR004520">
    <property type="entry name" value="GTPase_MnmE"/>
</dbReference>
<dbReference type="InterPro" id="IPR027368">
    <property type="entry name" value="MnmE_dom2"/>
</dbReference>
<dbReference type="InterPro" id="IPR025867">
    <property type="entry name" value="MnmE_helical"/>
</dbReference>
<dbReference type="InterPro" id="IPR027417">
    <property type="entry name" value="P-loop_NTPase"/>
</dbReference>
<dbReference type="InterPro" id="IPR005225">
    <property type="entry name" value="Small_GTP-bd"/>
</dbReference>
<dbReference type="InterPro" id="IPR027266">
    <property type="entry name" value="TrmE/GcvT_dom1"/>
</dbReference>
<dbReference type="NCBIfam" id="TIGR00450">
    <property type="entry name" value="mnmE_trmE_thdF"/>
    <property type="match status" value="1"/>
</dbReference>
<dbReference type="NCBIfam" id="NF003661">
    <property type="entry name" value="PRK05291.1-3"/>
    <property type="match status" value="1"/>
</dbReference>
<dbReference type="NCBIfam" id="TIGR00231">
    <property type="entry name" value="small_GTP"/>
    <property type="match status" value="1"/>
</dbReference>
<dbReference type="PANTHER" id="PTHR42714">
    <property type="entry name" value="TRNA MODIFICATION GTPASE GTPBP3"/>
    <property type="match status" value="1"/>
</dbReference>
<dbReference type="PANTHER" id="PTHR42714:SF2">
    <property type="entry name" value="TRNA MODIFICATION GTPASE GTPBP3, MITOCHONDRIAL"/>
    <property type="match status" value="1"/>
</dbReference>
<dbReference type="Pfam" id="PF01926">
    <property type="entry name" value="MMR_HSR1"/>
    <property type="match status" value="1"/>
</dbReference>
<dbReference type="Pfam" id="PF12631">
    <property type="entry name" value="MnmE_helical"/>
    <property type="match status" value="1"/>
</dbReference>
<dbReference type="Pfam" id="PF10396">
    <property type="entry name" value="TrmE_N"/>
    <property type="match status" value="1"/>
</dbReference>
<dbReference type="SUPFAM" id="SSF52540">
    <property type="entry name" value="P-loop containing nucleoside triphosphate hydrolases"/>
    <property type="match status" value="1"/>
</dbReference>
<dbReference type="SUPFAM" id="SSF116878">
    <property type="entry name" value="TrmE connector domain"/>
    <property type="match status" value="1"/>
</dbReference>
<dbReference type="PROSITE" id="PS51709">
    <property type="entry name" value="G_TRME"/>
    <property type="match status" value="1"/>
</dbReference>
<sequence length="465" mass="51360">MQSATMEFDTIAAISTPPGEGAISIVRLSGEQAVAIANKVYRSGTKDLAKVPTHTIHYGHIVDPQNDQLIDEVMLSVMRAPKTFTREDVVEINCHGGIVVVNQLLQLLLREGARMAEPGEFTKRAFLNGRMDLSQAEAVMDLIRAKTDKAMNVALNQLDGNLSTLIRSLRQEILNTLAQVEVNIDYPEYDDVEELTTKLLLEKAEFVKAQIQQLLTTAKQGKILREGLSTAIIGRPNVGKSSLLNHLLREEKAIVTDIAGTTRDVIEEYVNVRGVPLKLIDTAGIRETEDIVERIGVERSRKALADSDLILLVLNQSEELTEEDRQLLEATKGLKRVILLNKMDLPTKLDPNELQELVPAEEILSVSVLSNTGLDQLEAKIADLFFGGQTGEKDATYISNTRHIALLDQAALSLQEVINGIEAGMPVDLVQIDMTRCWDYLGEIVGDSVQDELITQLFSQFCLGK</sequence>
<organism>
    <name type="scientific">Enterococcus faecalis (strain ATCC 700802 / V583)</name>
    <dbReference type="NCBI Taxonomy" id="226185"/>
    <lineage>
        <taxon>Bacteria</taxon>
        <taxon>Bacillati</taxon>
        <taxon>Bacillota</taxon>
        <taxon>Bacilli</taxon>
        <taxon>Lactobacillales</taxon>
        <taxon>Enterococcaceae</taxon>
        <taxon>Enterococcus</taxon>
    </lineage>
</organism>
<proteinExistence type="inferred from homology"/>
<keyword id="KW-0963">Cytoplasm</keyword>
<keyword id="KW-0342">GTP-binding</keyword>
<keyword id="KW-0378">Hydrolase</keyword>
<keyword id="KW-0460">Magnesium</keyword>
<keyword id="KW-0479">Metal-binding</keyword>
<keyword id="KW-0547">Nucleotide-binding</keyword>
<keyword id="KW-0630">Potassium</keyword>
<keyword id="KW-1185">Reference proteome</keyword>
<keyword id="KW-0819">tRNA processing</keyword>
<comment type="function">
    <text evidence="1">Exhibits a very high intrinsic GTPase hydrolysis rate. Involved in the addition of a carboxymethylaminomethyl (cmnm) group at the wobble position (U34) of certain tRNAs, forming tRNA-cmnm(5)s(2)U34.</text>
</comment>
<comment type="cofactor">
    <cofactor evidence="1">
        <name>K(+)</name>
        <dbReference type="ChEBI" id="CHEBI:29103"/>
    </cofactor>
    <text evidence="1">Binds 1 potassium ion per subunit.</text>
</comment>
<comment type="subunit">
    <text evidence="1">Homodimer. Heterotetramer of two MnmE and two MnmG subunits.</text>
</comment>
<comment type="subcellular location">
    <subcellularLocation>
        <location evidence="1">Cytoplasm</location>
    </subcellularLocation>
</comment>
<comment type="similarity">
    <text evidence="1">Belongs to the TRAFAC class TrmE-Era-EngA-EngB-Septin-like GTPase superfamily. TrmE GTPase family.</text>
</comment>
<accession>Q820T0</accession>